<gene>
    <name evidence="1" type="primary">fdhD</name>
    <name type="ordered locus">SSON_4064</name>
</gene>
<accession>Q3YV81</accession>
<reference key="1">
    <citation type="journal article" date="2005" name="Nucleic Acids Res.">
        <title>Genome dynamics and diversity of Shigella species, the etiologic agents of bacillary dysentery.</title>
        <authorList>
            <person name="Yang F."/>
            <person name="Yang J."/>
            <person name="Zhang X."/>
            <person name="Chen L."/>
            <person name="Jiang Y."/>
            <person name="Yan Y."/>
            <person name="Tang X."/>
            <person name="Wang J."/>
            <person name="Xiong Z."/>
            <person name="Dong J."/>
            <person name="Xue Y."/>
            <person name="Zhu Y."/>
            <person name="Xu X."/>
            <person name="Sun L."/>
            <person name="Chen S."/>
            <person name="Nie H."/>
            <person name="Peng J."/>
            <person name="Xu J."/>
            <person name="Wang Y."/>
            <person name="Yuan Z."/>
            <person name="Wen Y."/>
            <person name="Yao Z."/>
            <person name="Shen Y."/>
            <person name="Qiang B."/>
            <person name="Hou Y."/>
            <person name="Yu J."/>
            <person name="Jin Q."/>
        </authorList>
    </citation>
    <scope>NUCLEOTIDE SEQUENCE [LARGE SCALE GENOMIC DNA]</scope>
    <source>
        <strain>Ss046</strain>
    </source>
</reference>
<organism>
    <name type="scientific">Shigella sonnei (strain Ss046)</name>
    <dbReference type="NCBI Taxonomy" id="300269"/>
    <lineage>
        <taxon>Bacteria</taxon>
        <taxon>Pseudomonadati</taxon>
        <taxon>Pseudomonadota</taxon>
        <taxon>Gammaproteobacteria</taxon>
        <taxon>Enterobacterales</taxon>
        <taxon>Enterobacteriaceae</taxon>
        <taxon>Shigella</taxon>
    </lineage>
</organism>
<comment type="function">
    <text evidence="1">Required for formate dehydrogenase (FDH) activity. Acts as a sulfur carrier protein that transfers sulfur from IscS to the molybdenum cofactor prior to its insertion into FDH.</text>
</comment>
<comment type="subcellular location">
    <subcellularLocation>
        <location evidence="1">Cytoplasm</location>
    </subcellularLocation>
</comment>
<comment type="similarity">
    <text evidence="1">Belongs to the FdhD family.</text>
</comment>
<sequence>MKKTQRKEIENVTNITGVRQIELWRRDDLQHPRLDEVAEEVPVALVYNGISHVVMMASPKDLEYFALGFSLSEGIIESPRDIFGMDVVPSCNGLEVQIELSSRRFMGLKERRRALAGRTGCGVCGVEQLNDIGKPVQPLPFTQTFDLNKLDDALRHLNDFQPVGQLTGCTHAAAWMLPSGELVGGHEDVGRHVALDKLLGRRSQEGESWQQGAVLVSSRASYEMVQKSAMCGVEILFAVSAATTLAVEVAERCNLTLVGFCKPGRATVYTHPQRLSN</sequence>
<feature type="chain" id="PRO_1000020821" description="Sulfur carrier protein FdhD">
    <location>
        <begin position="1"/>
        <end position="277"/>
    </location>
</feature>
<feature type="active site" description="Cysteine persulfide intermediate" evidence="1">
    <location>
        <position position="121"/>
    </location>
</feature>
<feature type="binding site" evidence="1">
    <location>
        <begin position="260"/>
        <end position="265"/>
    </location>
    <ligand>
        <name>Mo-bis(molybdopterin guanine dinucleotide)</name>
        <dbReference type="ChEBI" id="CHEBI:60539"/>
    </ligand>
</feature>
<evidence type="ECO:0000255" key="1">
    <source>
        <dbReference type="HAMAP-Rule" id="MF_00187"/>
    </source>
</evidence>
<name>FDHD_SHISS</name>
<dbReference type="EMBL" id="CP000038">
    <property type="protein sequence ID" value="AAZ90581.1"/>
    <property type="molecule type" value="Genomic_DNA"/>
</dbReference>
<dbReference type="RefSeq" id="WP_000753617.1">
    <property type="nucleotide sequence ID" value="NC_007384.1"/>
</dbReference>
<dbReference type="SMR" id="Q3YV81"/>
<dbReference type="GeneID" id="93778043"/>
<dbReference type="KEGG" id="ssn:SSON_4064"/>
<dbReference type="HOGENOM" id="CLU_056887_2_0_6"/>
<dbReference type="Proteomes" id="UP000002529">
    <property type="component" value="Chromosome"/>
</dbReference>
<dbReference type="GO" id="GO:0005737">
    <property type="term" value="C:cytoplasm"/>
    <property type="evidence" value="ECO:0007669"/>
    <property type="project" value="UniProtKB-SubCell"/>
</dbReference>
<dbReference type="GO" id="GO:0097163">
    <property type="term" value="F:sulfur carrier activity"/>
    <property type="evidence" value="ECO:0007669"/>
    <property type="project" value="UniProtKB-UniRule"/>
</dbReference>
<dbReference type="GO" id="GO:0016783">
    <property type="term" value="F:sulfurtransferase activity"/>
    <property type="evidence" value="ECO:0007669"/>
    <property type="project" value="InterPro"/>
</dbReference>
<dbReference type="GO" id="GO:0006777">
    <property type="term" value="P:Mo-molybdopterin cofactor biosynthetic process"/>
    <property type="evidence" value="ECO:0007669"/>
    <property type="project" value="UniProtKB-UniRule"/>
</dbReference>
<dbReference type="FunFam" id="3.10.20.10:FF:000003">
    <property type="entry name" value="Sulfur carrier protein FdhD"/>
    <property type="match status" value="1"/>
</dbReference>
<dbReference type="FunFam" id="3.40.140.10:FF:000027">
    <property type="entry name" value="Sulfur carrier protein FdhD"/>
    <property type="match status" value="1"/>
</dbReference>
<dbReference type="Gene3D" id="3.10.20.10">
    <property type="match status" value="1"/>
</dbReference>
<dbReference type="Gene3D" id="3.40.140.10">
    <property type="entry name" value="Cytidine Deaminase, domain 2"/>
    <property type="match status" value="1"/>
</dbReference>
<dbReference type="HAMAP" id="MF_00187">
    <property type="entry name" value="FdhD"/>
    <property type="match status" value="1"/>
</dbReference>
<dbReference type="InterPro" id="IPR016193">
    <property type="entry name" value="Cytidine_deaminase-like"/>
</dbReference>
<dbReference type="InterPro" id="IPR003786">
    <property type="entry name" value="FdhD"/>
</dbReference>
<dbReference type="NCBIfam" id="TIGR00129">
    <property type="entry name" value="fdhD_narQ"/>
    <property type="match status" value="1"/>
</dbReference>
<dbReference type="PANTHER" id="PTHR30592">
    <property type="entry name" value="FORMATE DEHYDROGENASE"/>
    <property type="match status" value="1"/>
</dbReference>
<dbReference type="PANTHER" id="PTHR30592:SF1">
    <property type="entry name" value="SULFUR CARRIER PROTEIN FDHD"/>
    <property type="match status" value="1"/>
</dbReference>
<dbReference type="Pfam" id="PF02634">
    <property type="entry name" value="FdhD-NarQ"/>
    <property type="match status" value="1"/>
</dbReference>
<dbReference type="PIRSF" id="PIRSF015626">
    <property type="entry name" value="FdhD"/>
    <property type="match status" value="1"/>
</dbReference>
<dbReference type="SUPFAM" id="SSF53927">
    <property type="entry name" value="Cytidine deaminase-like"/>
    <property type="match status" value="1"/>
</dbReference>
<keyword id="KW-0963">Cytoplasm</keyword>
<keyword id="KW-0501">Molybdenum cofactor biosynthesis</keyword>
<keyword id="KW-1185">Reference proteome</keyword>
<proteinExistence type="inferred from homology"/>
<protein>
    <recommendedName>
        <fullName evidence="1">Sulfur carrier protein FdhD</fullName>
    </recommendedName>
</protein>